<feature type="initiator methionine" description="Removed" evidence="5">
    <location>
        <position position="1"/>
    </location>
</feature>
<feature type="chain" id="PRO_0000244355" description="Regulation of nuclear pre-mRNA domain-containing protein 2">
    <location>
        <begin position="2"/>
        <end position="1461"/>
    </location>
</feature>
<feature type="domain" description="CID" evidence="2">
    <location>
        <begin position="19"/>
        <end position="149"/>
    </location>
</feature>
<feature type="region of interest" description="Disordered" evidence="3">
    <location>
        <begin position="311"/>
        <end position="438"/>
    </location>
</feature>
<feature type="region of interest" description="Disordered" evidence="3">
    <location>
        <begin position="469"/>
        <end position="504"/>
    </location>
</feature>
<feature type="region of interest" description="Disordered" evidence="3">
    <location>
        <begin position="547"/>
        <end position="623"/>
    </location>
</feature>
<feature type="region of interest" description="Disordered" evidence="3">
    <location>
        <begin position="696"/>
        <end position="849"/>
    </location>
</feature>
<feature type="region of interest" description="Disordered" evidence="3">
    <location>
        <begin position="900"/>
        <end position="997"/>
    </location>
</feature>
<feature type="region of interest" description="Disordered" evidence="3">
    <location>
        <begin position="1016"/>
        <end position="1102"/>
    </location>
</feature>
<feature type="region of interest" description="Disordered" evidence="3">
    <location>
        <begin position="1132"/>
        <end position="1312"/>
    </location>
</feature>
<feature type="region of interest" description="Disordered" evidence="3">
    <location>
        <begin position="1340"/>
        <end position="1461"/>
    </location>
</feature>
<feature type="compositionally biased region" description="Basic and acidic residues" evidence="3">
    <location>
        <begin position="352"/>
        <end position="368"/>
    </location>
</feature>
<feature type="compositionally biased region" description="Acidic residues" evidence="3">
    <location>
        <begin position="369"/>
        <end position="378"/>
    </location>
</feature>
<feature type="compositionally biased region" description="Basic and acidic residues" evidence="3">
    <location>
        <begin position="379"/>
        <end position="394"/>
    </location>
</feature>
<feature type="compositionally biased region" description="Polar residues" evidence="3">
    <location>
        <begin position="397"/>
        <end position="416"/>
    </location>
</feature>
<feature type="compositionally biased region" description="Low complexity" evidence="3">
    <location>
        <begin position="417"/>
        <end position="426"/>
    </location>
</feature>
<feature type="compositionally biased region" description="Low complexity" evidence="3">
    <location>
        <begin position="473"/>
        <end position="491"/>
    </location>
</feature>
<feature type="compositionally biased region" description="Low complexity" evidence="3">
    <location>
        <begin position="553"/>
        <end position="566"/>
    </location>
</feature>
<feature type="compositionally biased region" description="Polar residues" evidence="3">
    <location>
        <begin position="567"/>
        <end position="583"/>
    </location>
</feature>
<feature type="compositionally biased region" description="Low complexity" evidence="3">
    <location>
        <begin position="593"/>
        <end position="614"/>
    </location>
</feature>
<feature type="compositionally biased region" description="Polar residues" evidence="3">
    <location>
        <begin position="742"/>
        <end position="752"/>
    </location>
</feature>
<feature type="compositionally biased region" description="Low complexity" evidence="3">
    <location>
        <begin position="758"/>
        <end position="768"/>
    </location>
</feature>
<feature type="compositionally biased region" description="Polar residues" evidence="3">
    <location>
        <begin position="927"/>
        <end position="954"/>
    </location>
</feature>
<feature type="compositionally biased region" description="Polar residues" evidence="3">
    <location>
        <begin position="1031"/>
        <end position="1055"/>
    </location>
</feature>
<feature type="compositionally biased region" description="Low complexity" evidence="3">
    <location>
        <begin position="1141"/>
        <end position="1150"/>
    </location>
</feature>
<feature type="compositionally biased region" description="Gly residues" evidence="3">
    <location>
        <begin position="1151"/>
        <end position="1160"/>
    </location>
</feature>
<feature type="compositionally biased region" description="Polar residues" evidence="3">
    <location>
        <begin position="1174"/>
        <end position="1189"/>
    </location>
</feature>
<feature type="compositionally biased region" description="Pro residues" evidence="3">
    <location>
        <begin position="1267"/>
        <end position="1277"/>
    </location>
</feature>
<feature type="compositionally biased region" description="Pro residues" evidence="3">
    <location>
        <begin position="1290"/>
        <end position="1299"/>
    </location>
</feature>
<feature type="compositionally biased region" description="Gly residues" evidence="3">
    <location>
        <begin position="1382"/>
        <end position="1391"/>
    </location>
</feature>
<feature type="compositionally biased region" description="Basic and acidic residues" evidence="3">
    <location>
        <begin position="1417"/>
        <end position="1434"/>
    </location>
</feature>
<feature type="modified residue" description="N-acetylalanine" evidence="5">
    <location>
        <position position="2"/>
    </location>
</feature>
<feature type="modified residue" description="Phosphoserine" evidence="17">
    <location>
        <position position="16"/>
    </location>
</feature>
<feature type="modified residue" description="Phosphoserine" evidence="16">
    <location>
        <position position="356"/>
    </location>
</feature>
<feature type="modified residue" description="Phosphothreonine" evidence="16 17">
    <location>
        <position position="358"/>
    </location>
</feature>
<feature type="modified residue" description="Phosphoserine" evidence="11 12 13 14 15 16 17 19">
    <location>
        <position position="374"/>
    </location>
</feature>
<feature type="modified residue" description="Phosphoserine" evidence="14 15">
    <location>
        <position position="473"/>
    </location>
</feature>
<feature type="modified residue" description="Phosphoserine" evidence="14">
    <location>
        <position position="476"/>
    </location>
</feature>
<feature type="modified residue" description="Phosphoserine" evidence="12">
    <location>
        <position position="479"/>
    </location>
</feature>
<feature type="modified residue" description="Phosphothreonine" evidence="14 15">
    <location>
        <position position="482"/>
    </location>
</feature>
<feature type="modified residue" description="Phosphoserine" evidence="12 14 17">
    <location>
        <position position="485"/>
    </location>
</feature>
<feature type="modified residue" description="Phosphothreonine" evidence="12 15 17">
    <location>
        <position position="517"/>
    </location>
</feature>
<feature type="modified residue" description="Phosphoserine" evidence="19">
    <location>
        <position position="564"/>
    </location>
</feature>
<feature type="modified residue" description="Phosphoserine" evidence="12 14 15 16">
    <location>
        <position position="593"/>
    </location>
</feature>
<feature type="modified residue" description="Phosphothreonine" evidence="14">
    <location>
        <position position="598"/>
    </location>
</feature>
<feature type="modified residue" description="Phosphoserine" evidence="10 12 14 15 17">
    <location>
        <position position="614"/>
    </location>
</feature>
<feature type="modified residue" description="Phosphoserine" evidence="17">
    <location>
        <position position="663"/>
    </location>
</feature>
<feature type="modified residue" description="Phosphoserine" evidence="14 17">
    <location>
        <position position="665"/>
    </location>
</feature>
<feature type="modified residue" description="Phosphoserine" evidence="17">
    <location>
        <position position="716"/>
    </location>
</feature>
<feature type="modified residue" description="Phosphothreonine" evidence="11 12 15 17 19">
    <location>
        <position position="723"/>
    </location>
</feature>
<feature type="modified residue" description="Phosphoserine" evidence="1">
    <location>
        <position position="730"/>
    </location>
</feature>
<feature type="modified residue" description="Phosphothreonine" evidence="14">
    <location>
        <position position="732"/>
    </location>
</feature>
<feature type="modified residue" description="Phosphoserine" evidence="10 12 17">
    <location>
        <position position="758"/>
    </location>
</feature>
<feature type="modified residue" description="Phosphoserine" evidence="10">
    <location>
        <position position="762"/>
    </location>
</feature>
<feature type="modified residue" description="Phosphothreonine" evidence="17">
    <location>
        <position position="763"/>
    </location>
</feature>
<feature type="modified residue" description="Phosphoserine" evidence="17">
    <location>
        <position position="769"/>
    </location>
</feature>
<feature type="modified residue" description="Phosphoserine" evidence="17">
    <location>
        <position position="817"/>
    </location>
</feature>
<feature type="modified residue" description="Phosphoserine" evidence="14">
    <location>
        <position position="826"/>
    </location>
</feature>
<feature type="modified residue" description="Phosphoserine" evidence="12">
    <location>
        <position position="900"/>
    </location>
</feature>
<feature type="modified residue" description="Phosphoserine" evidence="12 14 17">
    <location>
        <position position="909"/>
    </location>
</feature>
<feature type="modified residue" description="Phosphoserine" evidence="12 15">
    <location>
        <position position="928"/>
    </location>
</feature>
<feature type="modified residue" description="Phosphoserine" evidence="17">
    <location>
        <position position="965"/>
    </location>
</feature>
<feature type="modified residue" description="Phosphoserine" evidence="17">
    <location>
        <position position="976"/>
    </location>
</feature>
<feature type="modified residue" description="Phosphoserine" evidence="1">
    <location>
        <position position="1068"/>
    </location>
</feature>
<feature type="modified residue" description="Phosphoserine" evidence="11 12 14 15 17">
    <location>
        <position position="1099"/>
    </location>
</feature>
<feature type="modified residue" description="Asymmetric dimethylarginine" evidence="18">
    <location>
        <position position="1366"/>
    </location>
</feature>
<feature type="modified residue" description="Asymmetric dimethylarginine" evidence="18">
    <location>
        <position position="1424"/>
    </location>
</feature>
<feature type="modified residue" description="Asymmetric dimethylarginine" evidence="18">
    <location>
        <position position="1430"/>
    </location>
</feature>
<feature type="splice variant" id="VSP_019546" description="In isoform 2." evidence="8">
    <location>
        <begin position="1"/>
        <end position="37"/>
    </location>
</feature>
<feature type="splice variant" id="VSP_019547" description="In isoform 3 and isoform 5." evidence="6 7">
    <location>
        <begin position="146"/>
        <end position="171"/>
    </location>
</feature>
<feature type="splice variant" id="VSP_035574" description="In isoform 4." evidence="9">
    <original>TTFKTQ</original>
    <variation>KCLFLS</variation>
    <location>
        <begin position="147"/>
        <end position="152"/>
    </location>
</feature>
<feature type="splice variant" id="VSP_035575" description="In isoform 4." evidence="9">
    <location>
        <begin position="153"/>
        <end position="1461"/>
    </location>
</feature>
<feature type="splice variant" id="VSP_053733" description="In isoform 5." evidence="6">
    <original>SKNDSFFTPDSNHNSLSQSTTGHLSLPQK</original>
    <variation>KHPCRSHGSPTHVRRGESPGLHHFHHVDD</variation>
    <location>
        <begin position="932"/>
        <end position="960"/>
    </location>
</feature>
<feature type="splice variant" id="VSP_053734" description="In isoform 5." evidence="6">
    <location>
        <begin position="961"/>
        <end position="1461"/>
    </location>
</feature>
<feature type="sequence variant" id="VAR_061700" description="In dbSNP:rs41273537.">
    <original>M</original>
    <variation>V</variation>
    <location>
        <position position="351"/>
    </location>
</feature>
<feature type="sequence conflict" description="In Ref. 6; AAF28922." evidence="9" ref="6">
    <original>W</original>
    <variation>C</variation>
    <location>
        <position position="167"/>
    </location>
</feature>
<feature type="sequence conflict" description="In Ref. 1; BAG51793." evidence="9" ref="1">
    <original>T</original>
    <variation>A</variation>
    <location>
        <position position="174"/>
    </location>
</feature>
<feature type="sequence conflict" description="In Ref. 1; BAG51793." evidence="9" ref="1">
    <original>P</original>
    <variation>L</variation>
    <location>
        <position position="1297"/>
    </location>
</feature>
<feature type="sequence conflict" description="In Ref. 1; BAG51793." evidence="9" ref="1">
    <original>G</original>
    <variation>R</variation>
    <location>
        <position position="1385"/>
    </location>
</feature>
<feature type="helix" evidence="20">
    <location>
        <begin position="20"/>
        <end position="33"/>
    </location>
</feature>
<feature type="helix" evidence="20">
    <location>
        <begin position="38"/>
        <end position="50"/>
    </location>
</feature>
<feature type="helix" evidence="20">
    <location>
        <begin position="52"/>
        <end position="54"/>
    </location>
</feature>
<feature type="helix" evidence="20">
    <location>
        <begin position="55"/>
        <end position="68"/>
    </location>
</feature>
<feature type="helix" evidence="20">
    <location>
        <begin position="71"/>
        <end position="87"/>
    </location>
</feature>
<feature type="turn" evidence="20">
    <location>
        <begin position="88"/>
        <end position="92"/>
    </location>
</feature>
<feature type="helix" evidence="20">
    <location>
        <begin position="95"/>
        <end position="101"/>
    </location>
</feature>
<feature type="helix" evidence="20">
    <location>
        <begin position="104"/>
        <end position="109"/>
    </location>
</feature>
<feature type="turn" evidence="20">
    <location>
        <begin position="114"/>
        <end position="116"/>
    </location>
</feature>
<feature type="helix" evidence="20">
    <location>
        <begin position="117"/>
        <end position="130"/>
    </location>
</feature>
<feature type="helix" evidence="20">
    <location>
        <begin position="135"/>
        <end position="144"/>
    </location>
</feature>
<dbReference type="EMBL" id="AK056707">
    <property type="protein sequence ID" value="BAG51793.1"/>
    <property type="molecule type" value="mRNA"/>
</dbReference>
<dbReference type="EMBL" id="AK291703">
    <property type="protein sequence ID" value="BAF84392.1"/>
    <property type="molecule type" value="mRNA"/>
</dbReference>
<dbReference type="EMBL" id="AK304380">
    <property type="protein sequence ID" value="BAG65218.1"/>
    <property type="molecule type" value="mRNA"/>
</dbReference>
<dbReference type="EMBL" id="BX641025">
    <property type="protein sequence ID" value="CAE46016.1"/>
    <property type="molecule type" value="mRNA"/>
</dbReference>
<dbReference type="EMBL" id="AL356356">
    <property type="status" value="NOT_ANNOTATED_CDS"/>
    <property type="molecule type" value="Genomic_DNA"/>
</dbReference>
<dbReference type="EMBL" id="AL611942">
    <property type="status" value="NOT_ANNOTATED_CDS"/>
    <property type="molecule type" value="Genomic_DNA"/>
</dbReference>
<dbReference type="EMBL" id="BX284695">
    <property type="status" value="NOT_ANNOTATED_CDS"/>
    <property type="molecule type" value="Genomic_DNA"/>
</dbReference>
<dbReference type="EMBL" id="CH471121">
    <property type="protein sequence ID" value="EAW53552.1"/>
    <property type="molecule type" value="Genomic_DNA"/>
</dbReference>
<dbReference type="EMBL" id="BC045623">
    <property type="protein sequence ID" value="AAH45623.2"/>
    <property type="status" value="ALT_INIT"/>
    <property type="molecule type" value="mRNA"/>
</dbReference>
<dbReference type="EMBL" id="AF161362">
    <property type="protein sequence ID" value="AAF28922.1"/>
    <property type="status" value="ALT_INIT"/>
    <property type="molecule type" value="mRNA"/>
</dbReference>
<dbReference type="EMBL" id="AB007929">
    <property type="protein sequence ID" value="BAA32305.2"/>
    <property type="molecule type" value="mRNA"/>
</dbReference>
<dbReference type="CCDS" id="CCDS44216.1">
    <molecule id="Q5VT52-1"/>
</dbReference>
<dbReference type="CCDS" id="CCDS72907.1">
    <molecule id="Q5VT52-3"/>
</dbReference>
<dbReference type="PIR" id="T00074">
    <property type="entry name" value="T00074"/>
</dbReference>
<dbReference type="RefSeq" id="NP_001284602.1">
    <molecule id="Q5VT52-5"/>
    <property type="nucleotide sequence ID" value="NM_001297673.2"/>
</dbReference>
<dbReference type="RefSeq" id="NP_001284603.1">
    <molecule id="Q5VT52-3"/>
    <property type="nucleotide sequence ID" value="NM_001297674.2"/>
</dbReference>
<dbReference type="RefSeq" id="NP_056018.2">
    <molecule id="Q5VT52-1"/>
    <property type="nucleotide sequence ID" value="NM_015203.5"/>
</dbReference>
<dbReference type="PDB" id="4FLB">
    <property type="method" value="X-ray"/>
    <property type="resolution" value="1.80 A"/>
    <property type="chains" value="A=19-149"/>
</dbReference>
<dbReference type="PDBsum" id="4FLB"/>
<dbReference type="SMR" id="Q5VT52"/>
<dbReference type="BioGRID" id="116852">
    <property type="interactions" value="155"/>
</dbReference>
<dbReference type="DIP" id="DIP-31155N"/>
<dbReference type="FunCoup" id="Q5VT52">
    <property type="interactions" value="2621"/>
</dbReference>
<dbReference type="IntAct" id="Q5VT52">
    <property type="interactions" value="79"/>
</dbReference>
<dbReference type="MINT" id="Q5VT52"/>
<dbReference type="STRING" id="9606.ENSP00000358064"/>
<dbReference type="GlyConnect" id="2891">
    <property type="glycosylation" value="1 O-GlcNAc glycan (2 sites)"/>
</dbReference>
<dbReference type="GlyCosmos" id="Q5VT52">
    <property type="glycosylation" value="39 sites, 2 glycans"/>
</dbReference>
<dbReference type="GlyGen" id="Q5VT52">
    <property type="glycosylation" value="67 sites, 2 O-linked glycans (65 sites)"/>
</dbReference>
<dbReference type="iPTMnet" id="Q5VT52"/>
<dbReference type="MetOSite" id="Q5VT52"/>
<dbReference type="PhosphoSitePlus" id="Q5VT52"/>
<dbReference type="SwissPalm" id="Q5VT52"/>
<dbReference type="BioMuta" id="RPRD2"/>
<dbReference type="DMDM" id="74746888"/>
<dbReference type="jPOST" id="Q5VT52"/>
<dbReference type="MassIVE" id="Q5VT52"/>
<dbReference type="PaxDb" id="9606-ENSP00000358064"/>
<dbReference type="PeptideAtlas" id="Q5VT52"/>
<dbReference type="ProteomicsDB" id="5845"/>
<dbReference type="ProteomicsDB" id="65302">
    <molecule id="Q5VT52-1"/>
</dbReference>
<dbReference type="ProteomicsDB" id="65303">
    <molecule id="Q5VT52-2"/>
</dbReference>
<dbReference type="ProteomicsDB" id="65304">
    <molecule id="Q5VT52-3"/>
</dbReference>
<dbReference type="ProteomicsDB" id="65305">
    <molecule id="Q5VT52-4"/>
</dbReference>
<dbReference type="Pumba" id="Q5VT52"/>
<dbReference type="Antibodypedia" id="10548">
    <property type="antibodies" value="64 antibodies from 16 providers"/>
</dbReference>
<dbReference type="DNASU" id="23248"/>
<dbReference type="Ensembl" id="ENST00000369067.7">
    <molecule id="Q5VT52-4"/>
    <property type="protein sequence ID" value="ENSP00000358063.3"/>
    <property type="gene ID" value="ENSG00000163125.16"/>
</dbReference>
<dbReference type="Ensembl" id="ENST00000369068.5">
    <molecule id="Q5VT52-1"/>
    <property type="protein sequence ID" value="ENSP00000358064.4"/>
    <property type="gene ID" value="ENSG00000163125.16"/>
</dbReference>
<dbReference type="Ensembl" id="ENST00000401000.8">
    <molecule id="Q5VT52-3"/>
    <property type="protein sequence ID" value="ENSP00000383785.4"/>
    <property type="gene ID" value="ENSG00000163125.16"/>
</dbReference>
<dbReference type="GeneID" id="23248"/>
<dbReference type="KEGG" id="hsa:23248"/>
<dbReference type="MANE-Select" id="ENST00000369068.5">
    <property type="protein sequence ID" value="ENSP00000358064.4"/>
    <property type="RefSeq nucleotide sequence ID" value="NM_015203.5"/>
    <property type="RefSeq protein sequence ID" value="NP_056018.2"/>
</dbReference>
<dbReference type="UCSC" id="uc001eup.5">
    <molecule id="Q5VT52-1"/>
    <property type="organism name" value="human"/>
</dbReference>
<dbReference type="AGR" id="HGNC:29039"/>
<dbReference type="CTD" id="23248"/>
<dbReference type="DisGeNET" id="23248"/>
<dbReference type="GeneCards" id="RPRD2"/>
<dbReference type="HGNC" id="HGNC:29039">
    <property type="gene designation" value="RPRD2"/>
</dbReference>
<dbReference type="HPA" id="ENSG00000163125">
    <property type="expression patterns" value="Low tissue specificity"/>
</dbReference>
<dbReference type="MIM" id="614695">
    <property type="type" value="gene"/>
</dbReference>
<dbReference type="neXtProt" id="NX_Q5VT52"/>
<dbReference type="OpenTargets" id="ENSG00000163125"/>
<dbReference type="PharmGKB" id="PA162402062"/>
<dbReference type="VEuPathDB" id="HostDB:ENSG00000163125"/>
<dbReference type="eggNOG" id="KOG2669">
    <property type="taxonomic scope" value="Eukaryota"/>
</dbReference>
<dbReference type="GeneTree" id="ENSGT00950000183094"/>
<dbReference type="HOGENOM" id="CLU_144992_0_0_1"/>
<dbReference type="InParanoid" id="Q5VT52"/>
<dbReference type="OMA" id="NYSHRAQ"/>
<dbReference type="OrthoDB" id="10069473at2759"/>
<dbReference type="PAN-GO" id="Q5VT52">
    <property type="GO annotations" value="3 GO annotations based on evolutionary models"/>
</dbReference>
<dbReference type="PhylomeDB" id="Q5VT52"/>
<dbReference type="TreeFam" id="TF320926"/>
<dbReference type="PathwayCommons" id="Q5VT52"/>
<dbReference type="Reactome" id="R-HSA-6807505">
    <property type="pathway name" value="RNA polymerase II transcribes snRNA genes"/>
</dbReference>
<dbReference type="SignaLink" id="Q5VT52"/>
<dbReference type="BioGRID-ORCS" id="23248">
    <property type="hits" value="88 hits in 1169 CRISPR screens"/>
</dbReference>
<dbReference type="ChiTaRS" id="RPRD2">
    <property type="organism name" value="human"/>
</dbReference>
<dbReference type="EvolutionaryTrace" id="Q5VT52"/>
<dbReference type="GeneWiki" id="KIAA0460"/>
<dbReference type="GenomeRNAi" id="23248"/>
<dbReference type="Pharos" id="Q5VT52">
    <property type="development level" value="Tdark"/>
</dbReference>
<dbReference type="PRO" id="PR:Q5VT52"/>
<dbReference type="Proteomes" id="UP000005640">
    <property type="component" value="Chromosome 1"/>
</dbReference>
<dbReference type="RNAct" id="Q5VT52">
    <property type="molecule type" value="protein"/>
</dbReference>
<dbReference type="Bgee" id="ENSG00000163125">
    <property type="expression patterns" value="Expressed in buccal mucosa cell and 219 other cell types or tissues"/>
</dbReference>
<dbReference type="GO" id="GO:0005654">
    <property type="term" value="C:nucleoplasm"/>
    <property type="evidence" value="ECO:0000304"/>
    <property type="project" value="Reactome"/>
</dbReference>
<dbReference type="GO" id="GO:0097550">
    <property type="term" value="C:transcription preinitiation complex"/>
    <property type="evidence" value="ECO:0000314"/>
    <property type="project" value="UniProtKB"/>
</dbReference>
<dbReference type="GO" id="GO:0099122">
    <property type="term" value="F:RNA polymerase II C-terminal domain binding"/>
    <property type="evidence" value="ECO:0007669"/>
    <property type="project" value="InterPro"/>
</dbReference>
<dbReference type="GO" id="GO:0000993">
    <property type="term" value="F:RNA polymerase II complex binding"/>
    <property type="evidence" value="ECO:0000318"/>
    <property type="project" value="GO_Central"/>
</dbReference>
<dbReference type="GO" id="GO:0031124">
    <property type="term" value="P:mRNA 3'-end processing"/>
    <property type="evidence" value="ECO:0000318"/>
    <property type="project" value="GO_Central"/>
</dbReference>
<dbReference type="CDD" id="cd17001">
    <property type="entry name" value="CID_RPRD2"/>
    <property type="match status" value="1"/>
</dbReference>
<dbReference type="FunFam" id="1.25.40.90:FF:000020">
    <property type="entry name" value="regulation of nuclear pre-mRNA domain-containing protein 2 isoform X1"/>
    <property type="match status" value="1"/>
</dbReference>
<dbReference type="Gene3D" id="1.25.40.90">
    <property type="match status" value="1"/>
</dbReference>
<dbReference type="Gene3D" id="6.10.250.2560">
    <property type="match status" value="1"/>
</dbReference>
<dbReference type="InterPro" id="IPR006569">
    <property type="entry name" value="CID_dom"/>
</dbReference>
<dbReference type="InterPro" id="IPR008942">
    <property type="entry name" value="ENTH_VHS"/>
</dbReference>
<dbReference type="InterPro" id="IPR047885">
    <property type="entry name" value="RPRD2_CID"/>
</dbReference>
<dbReference type="PANTHER" id="PTHR12460">
    <property type="entry name" value="CYCLIN-DEPENDENT KINASE INHIBITOR-RELATED PROTEIN"/>
    <property type="match status" value="1"/>
</dbReference>
<dbReference type="PANTHER" id="PTHR12460:SF40">
    <property type="entry name" value="REGULATION OF NUCLEAR PRE-MRNA DOMAIN-CONTAINING PROTEIN 2"/>
    <property type="match status" value="1"/>
</dbReference>
<dbReference type="Pfam" id="PF04818">
    <property type="entry name" value="CID"/>
    <property type="match status" value="1"/>
</dbReference>
<dbReference type="SMART" id="SM00582">
    <property type="entry name" value="RPR"/>
    <property type="match status" value="1"/>
</dbReference>
<dbReference type="SUPFAM" id="SSF48464">
    <property type="entry name" value="ENTH/VHS domain"/>
    <property type="match status" value="1"/>
</dbReference>
<dbReference type="PROSITE" id="PS51391">
    <property type="entry name" value="CID"/>
    <property type="match status" value="1"/>
</dbReference>
<gene>
    <name type="primary">RPRD2</name>
    <name type="synonym">KIAA0460</name>
    <name type="ORF">HSPC099</name>
</gene>
<reference key="1">
    <citation type="journal article" date="2004" name="Nat. Genet.">
        <title>Complete sequencing and characterization of 21,243 full-length human cDNAs.</title>
        <authorList>
            <person name="Ota T."/>
            <person name="Suzuki Y."/>
            <person name="Nishikawa T."/>
            <person name="Otsuki T."/>
            <person name="Sugiyama T."/>
            <person name="Irie R."/>
            <person name="Wakamatsu A."/>
            <person name="Hayashi K."/>
            <person name="Sato H."/>
            <person name="Nagai K."/>
            <person name="Kimura K."/>
            <person name="Makita H."/>
            <person name="Sekine M."/>
            <person name="Obayashi M."/>
            <person name="Nishi T."/>
            <person name="Shibahara T."/>
            <person name="Tanaka T."/>
            <person name="Ishii S."/>
            <person name="Yamamoto J."/>
            <person name="Saito K."/>
            <person name="Kawai Y."/>
            <person name="Isono Y."/>
            <person name="Nakamura Y."/>
            <person name="Nagahari K."/>
            <person name="Murakami K."/>
            <person name="Yasuda T."/>
            <person name="Iwayanagi T."/>
            <person name="Wagatsuma M."/>
            <person name="Shiratori A."/>
            <person name="Sudo H."/>
            <person name="Hosoiri T."/>
            <person name="Kaku Y."/>
            <person name="Kodaira H."/>
            <person name="Kondo H."/>
            <person name="Sugawara M."/>
            <person name="Takahashi M."/>
            <person name="Kanda K."/>
            <person name="Yokoi T."/>
            <person name="Furuya T."/>
            <person name="Kikkawa E."/>
            <person name="Omura Y."/>
            <person name="Abe K."/>
            <person name="Kamihara K."/>
            <person name="Katsuta N."/>
            <person name="Sato K."/>
            <person name="Tanikawa M."/>
            <person name="Yamazaki M."/>
            <person name="Ninomiya K."/>
            <person name="Ishibashi T."/>
            <person name="Yamashita H."/>
            <person name="Murakawa K."/>
            <person name="Fujimori K."/>
            <person name="Tanai H."/>
            <person name="Kimata M."/>
            <person name="Watanabe M."/>
            <person name="Hiraoka S."/>
            <person name="Chiba Y."/>
            <person name="Ishida S."/>
            <person name="Ono Y."/>
            <person name="Takiguchi S."/>
            <person name="Watanabe S."/>
            <person name="Yosida M."/>
            <person name="Hotuta T."/>
            <person name="Kusano J."/>
            <person name="Kanehori K."/>
            <person name="Takahashi-Fujii A."/>
            <person name="Hara H."/>
            <person name="Tanase T.-O."/>
            <person name="Nomura Y."/>
            <person name="Togiya S."/>
            <person name="Komai F."/>
            <person name="Hara R."/>
            <person name="Takeuchi K."/>
            <person name="Arita M."/>
            <person name="Imose N."/>
            <person name="Musashino K."/>
            <person name="Yuuki H."/>
            <person name="Oshima A."/>
            <person name="Sasaki N."/>
            <person name="Aotsuka S."/>
            <person name="Yoshikawa Y."/>
            <person name="Matsunawa H."/>
            <person name="Ichihara T."/>
            <person name="Shiohata N."/>
            <person name="Sano S."/>
            <person name="Moriya S."/>
            <person name="Momiyama H."/>
            <person name="Satoh N."/>
            <person name="Takami S."/>
            <person name="Terashima Y."/>
            <person name="Suzuki O."/>
            <person name="Nakagawa S."/>
            <person name="Senoh A."/>
            <person name="Mizoguchi H."/>
            <person name="Goto Y."/>
            <person name="Shimizu F."/>
            <person name="Wakebe H."/>
            <person name="Hishigaki H."/>
            <person name="Watanabe T."/>
            <person name="Sugiyama A."/>
            <person name="Takemoto M."/>
            <person name="Kawakami B."/>
            <person name="Yamazaki M."/>
            <person name="Watanabe K."/>
            <person name="Kumagai A."/>
            <person name="Itakura S."/>
            <person name="Fukuzumi Y."/>
            <person name="Fujimori Y."/>
            <person name="Komiyama M."/>
            <person name="Tashiro H."/>
            <person name="Tanigami A."/>
            <person name="Fujiwara T."/>
            <person name="Ono T."/>
            <person name="Yamada K."/>
            <person name="Fujii Y."/>
            <person name="Ozaki K."/>
            <person name="Hirao M."/>
            <person name="Ohmori Y."/>
            <person name="Kawabata A."/>
            <person name="Hikiji T."/>
            <person name="Kobatake N."/>
            <person name="Inagaki H."/>
            <person name="Ikema Y."/>
            <person name="Okamoto S."/>
            <person name="Okitani R."/>
            <person name="Kawakami T."/>
            <person name="Noguchi S."/>
            <person name="Itoh T."/>
            <person name="Shigeta K."/>
            <person name="Senba T."/>
            <person name="Matsumura K."/>
            <person name="Nakajima Y."/>
            <person name="Mizuno T."/>
            <person name="Morinaga M."/>
            <person name="Sasaki M."/>
            <person name="Togashi T."/>
            <person name="Oyama M."/>
            <person name="Hata H."/>
            <person name="Watanabe M."/>
            <person name="Komatsu T."/>
            <person name="Mizushima-Sugano J."/>
            <person name="Satoh T."/>
            <person name="Shirai Y."/>
            <person name="Takahashi Y."/>
            <person name="Nakagawa K."/>
            <person name="Okumura K."/>
            <person name="Nagase T."/>
            <person name="Nomura N."/>
            <person name="Kikuchi H."/>
            <person name="Masuho Y."/>
            <person name="Yamashita R."/>
            <person name="Nakai K."/>
            <person name="Yada T."/>
            <person name="Nakamura Y."/>
            <person name="Ohara O."/>
            <person name="Isogai T."/>
            <person name="Sugano S."/>
        </authorList>
    </citation>
    <scope>NUCLEOTIDE SEQUENCE [LARGE SCALE MRNA] (ISOFORMS 1 AND 5)</scope>
    <source>
        <tissue>Placenta</tissue>
        <tissue>Trachea</tissue>
    </source>
</reference>
<reference key="2">
    <citation type="journal article" date="2007" name="BMC Genomics">
        <title>The full-ORF clone resource of the German cDNA consortium.</title>
        <authorList>
            <person name="Bechtel S."/>
            <person name="Rosenfelder H."/>
            <person name="Duda A."/>
            <person name="Schmidt C.P."/>
            <person name="Ernst U."/>
            <person name="Wellenreuther R."/>
            <person name="Mehrle A."/>
            <person name="Schuster C."/>
            <person name="Bahr A."/>
            <person name="Bloecker H."/>
            <person name="Heubner D."/>
            <person name="Hoerlein A."/>
            <person name="Michel G."/>
            <person name="Wedler H."/>
            <person name="Koehrer K."/>
            <person name="Ottenwaelder B."/>
            <person name="Poustka A."/>
            <person name="Wiemann S."/>
            <person name="Schupp I."/>
        </authorList>
    </citation>
    <scope>NUCLEOTIDE SEQUENCE [LARGE SCALE MRNA] (ISOFORM 2)</scope>
    <source>
        <tissue>Salivary gland</tissue>
    </source>
</reference>
<reference key="3">
    <citation type="journal article" date="2006" name="Nature">
        <title>The DNA sequence and biological annotation of human chromosome 1.</title>
        <authorList>
            <person name="Gregory S.G."/>
            <person name="Barlow K.F."/>
            <person name="McLay K.E."/>
            <person name="Kaul R."/>
            <person name="Swarbreck D."/>
            <person name="Dunham A."/>
            <person name="Scott C.E."/>
            <person name="Howe K.L."/>
            <person name="Woodfine K."/>
            <person name="Spencer C.C.A."/>
            <person name="Jones M.C."/>
            <person name="Gillson C."/>
            <person name="Searle S."/>
            <person name="Zhou Y."/>
            <person name="Kokocinski F."/>
            <person name="McDonald L."/>
            <person name="Evans R."/>
            <person name="Phillips K."/>
            <person name="Atkinson A."/>
            <person name="Cooper R."/>
            <person name="Jones C."/>
            <person name="Hall R.E."/>
            <person name="Andrews T.D."/>
            <person name="Lloyd C."/>
            <person name="Ainscough R."/>
            <person name="Almeida J.P."/>
            <person name="Ambrose K.D."/>
            <person name="Anderson F."/>
            <person name="Andrew R.W."/>
            <person name="Ashwell R.I.S."/>
            <person name="Aubin K."/>
            <person name="Babbage A.K."/>
            <person name="Bagguley C.L."/>
            <person name="Bailey J."/>
            <person name="Beasley H."/>
            <person name="Bethel G."/>
            <person name="Bird C.P."/>
            <person name="Bray-Allen S."/>
            <person name="Brown J.Y."/>
            <person name="Brown A.J."/>
            <person name="Buckley D."/>
            <person name="Burton J."/>
            <person name="Bye J."/>
            <person name="Carder C."/>
            <person name="Chapman J.C."/>
            <person name="Clark S.Y."/>
            <person name="Clarke G."/>
            <person name="Clee C."/>
            <person name="Cobley V."/>
            <person name="Collier R.E."/>
            <person name="Corby N."/>
            <person name="Coville G.J."/>
            <person name="Davies J."/>
            <person name="Deadman R."/>
            <person name="Dunn M."/>
            <person name="Earthrowl M."/>
            <person name="Ellington A.G."/>
            <person name="Errington H."/>
            <person name="Frankish A."/>
            <person name="Frankland J."/>
            <person name="French L."/>
            <person name="Garner P."/>
            <person name="Garnett J."/>
            <person name="Gay L."/>
            <person name="Ghori M.R.J."/>
            <person name="Gibson R."/>
            <person name="Gilby L.M."/>
            <person name="Gillett W."/>
            <person name="Glithero R.J."/>
            <person name="Grafham D.V."/>
            <person name="Griffiths C."/>
            <person name="Griffiths-Jones S."/>
            <person name="Grocock R."/>
            <person name="Hammond S."/>
            <person name="Harrison E.S.I."/>
            <person name="Hart E."/>
            <person name="Haugen E."/>
            <person name="Heath P.D."/>
            <person name="Holmes S."/>
            <person name="Holt K."/>
            <person name="Howden P.J."/>
            <person name="Hunt A.R."/>
            <person name="Hunt S.E."/>
            <person name="Hunter G."/>
            <person name="Isherwood J."/>
            <person name="James R."/>
            <person name="Johnson C."/>
            <person name="Johnson D."/>
            <person name="Joy A."/>
            <person name="Kay M."/>
            <person name="Kershaw J.K."/>
            <person name="Kibukawa M."/>
            <person name="Kimberley A.M."/>
            <person name="King A."/>
            <person name="Knights A.J."/>
            <person name="Lad H."/>
            <person name="Laird G."/>
            <person name="Lawlor S."/>
            <person name="Leongamornlert D.A."/>
            <person name="Lloyd D.M."/>
            <person name="Loveland J."/>
            <person name="Lovell J."/>
            <person name="Lush M.J."/>
            <person name="Lyne R."/>
            <person name="Martin S."/>
            <person name="Mashreghi-Mohammadi M."/>
            <person name="Matthews L."/>
            <person name="Matthews N.S.W."/>
            <person name="McLaren S."/>
            <person name="Milne S."/>
            <person name="Mistry S."/>
            <person name="Moore M.J.F."/>
            <person name="Nickerson T."/>
            <person name="O'Dell C.N."/>
            <person name="Oliver K."/>
            <person name="Palmeiri A."/>
            <person name="Palmer S.A."/>
            <person name="Parker A."/>
            <person name="Patel D."/>
            <person name="Pearce A.V."/>
            <person name="Peck A.I."/>
            <person name="Pelan S."/>
            <person name="Phelps K."/>
            <person name="Phillimore B.J."/>
            <person name="Plumb R."/>
            <person name="Rajan J."/>
            <person name="Raymond C."/>
            <person name="Rouse G."/>
            <person name="Saenphimmachak C."/>
            <person name="Sehra H.K."/>
            <person name="Sheridan E."/>
            <person name="Shownkeen R."/>
            <person name="Sims S."/>
            <person name="Skuce C.D."/>
            <person name="Smith M."/>
            <person name="Steward C."/>
            <person name="Subramanian S."/>
            <person name="Sycamore N."/>
            <person name="Tracey A."/>
            <person name="Tromans A."/>
            <person name="Van Helmond Z."/>
            <person name="Wall M."/>
            <person name="Wallis J.M."/>
            <person name="White S."/>
            <person name="Whitehead S.L."/>
            <person name="Wilkinson J.E."/>
            <person name="Willey D.L."/>
            <person name="Williams H."/>
            <person name="Wilming L."/>
            <person name="Wray P.W."/>
            <person name="Wu Z."/>
            <person name="Coulson A."/>
            <person name="Vaudin M."/>
            <person name="Sulston J.E."/>
            <person name="Durbin R.M."/>
            <person name="Hubbard T."/>
            <person name="Wooster R."/>
            <person name="Dunham I."/>
            <person name="Carter N.P."/>
            <person name="McVean G."/>
            <person name="Ross M.T."/>
            <person name="Harrow J."/>
            <person name="Olson M.V."/>
            <person name="Beck S."/>
            <person name="Rogers J."/>
            <person name="Bentley D.R."/>
        </authorList>
    </citation>
    <scope>NUCLEOTIDE SEQUENCE [LARGE SCALE GENOMIC DNA]</scope>
</reference>
<reference key="4">
    <citation type="submission" date="2005-09" db="EMBL/GenBank/DDBJ databases">
        <authorList>
            <person name="Mural R.J."/>
            <person name="Istrail S."/>
            <person name="Sutton G.G."/>
            <person name="Florea L."/>
            <person name="Halpern A.L."/>
            <person name="Mobarry C.M."/>
            <person name="Lippert R."/>
            <person name="Walenz B."/>
            <person name="Shatkay H."/>
            <person name="Dew I."/>
            <person name="Miller J.R."/>
            <person name="Flanigan M.J."/>
            <person name="Edwards N.J."/>
            <person name="Bolanos R."/>
            <person name="Fasulo D."/>
            <person name="Halldorsson B.V."/>
            <person name="Hannenhalli S."/>
            <person name="Turner R."/>
            <person name="Yooseph S."/>
            <person name="Lu F."/>
            <person name="Nusskern D.R."/>
            <person name="Shue B.C."/>
            <person name="Zheng X.H."/>
            <person name="Zhong F."/>
            <person name="Delcher A.L."/>
            <person name="Huson D.H."/>
            <person name="Kravitz S.A."/>
            <person name="Mouchard L."/>
            <person name="Reinert K."/>
            <person name="Remington K.A."/>
            <person name="Clark A.G."/>
            <person name="Waterman M.S."/>
            <person name="Eichler E.E."/>
            <person name="Adams M.D."/>
            <person name="Hunkapiller M.W."/>
            <person name="Myers E.W."/>
            <person name="Venter J.C."/>
        </authorList>
    </citation>
    <scope>NUCLEOTIDE SEQUENCE [LARGE SCALE GENOMIC DNA]</scope>
</reference>
<reference key="5">
    <citation type="journal article" date="2004" name="Genome Res.">
        <title>The status, quality, and expansion of the NIH full-length cDNA project: the Mammalian Gene Collection (MGC).</title>
        <authorList>
            <consortium name="The MGC Project Team"/>
        </authorList>
    </citation>
    <scope>NUCLEOTIDE SEQUENCE [LARGE SCALE MRNA] (ISOFORM 3)</scope>
    <source>
        <tissue>Testis</tissue>
    </source>
</reference>
<reference key="6">
    <citation type="submission" date="1999-05" db="EMBL/GenBank/DDBJ databases">
        <title>Human partial CDS cloned from CD34+ stem cells.</title>
        <authorList>
            <person name="Zhang Q.H."/>
            <person name="Ye M."/>
            <person name="Zhou J."/>
            <person name="Shen Y."/>
            <person name="Wu X.Y."/>
            <person name="Guan Z.Q."/>
            <person name="Wang L."/>
            <person name="Fan H.Y."/>
            <person name="Mao Y.F."/>
            <person name="Dai M."/>
            <person name="Huang Q.H."/>
            <person name="Chen S.J."/>
            <person name="Chen Z."/>
        </authorList>
    </citation>
    <scope>NUCLEOTIDE SEQUENCE [LARGE SCALE MRNA] OF 1-167 (ISOFORM 1)</scope>
    <source>
        <tissue>Umbilical cord blood</tissue>
    </source>
</reference>
<reference key="7">
    <citation type="journal article" date="1997" name="DNA Res.">
        <title>Characterization of cDNA clones in size-fractionated cDNA libraries from human brain.</title>
        <authorList>
            <person name="Seki N."/>
            <person name="Ohira M."/>
            <person name="Nagase T."/>
            <person name="Ishikawa K."/>
            <person name="Miyajima N."/>
            <person name="Nakajima D."/>
            <person name="Nomura N."/>
            <person name="Ohara O."/>
        </authorList>
    </citation>
    <scope>NUCLEOTIDE SEQUENCE [LARGE SCALE MRNA] OF 10-1461 (ISOFORM 1)</scope>
    <source>
        <tissue>Brain</tissue>
    </source>
</reference>
<reference key="8">
    <citation type="journal article" date="2002" name="DNA Res.">
        <title>Construction of expression-ready cDNA clones for KIAA genes: manual curation of 330 KIAA cDNA clones.</title>
        <authorList>
            <person name="Nakajima D."/>
            <person name="Okazaki N."/>
            <person name="Yamakawa H."/>
            <person name="Kikuno R."/>
            <person name="Ohara O."/>
            <person name="Nagase T."/>
        </authorList>
    </citation>
    <scope>SEQUENCE REVISION</scope>
</reference>
<reference key="9">
    <citation type="journal article" date="2006" name="Cell">
        <title>Global, in vivo, and site-specific phosphorylation dynamics in signaling networks.</title>
        <authorList>
            <person name="Olsen J.V."/>
            <person name="Blagoev B."/>
            <person name="Gnad F."/>
            <person name="Macek B."/>
            <person name="Kumar C."/>
            <person name="Mortensen P."/>
            <person name="Mann M."/>
        </authorList>
    </citation>
    <scope>PHOSPHORYLATION [LARGE SCALE ANALYSIS] AT SER-374; THR-723 AND SER-1099</scope>
    <scope>IDENTIFICATION BY MASS SPECTROMETRY [LARGE SCALE ANALYSIS]</scope>
    <source>
        <tissue>Cervix carcinoma</tissue>
    </source>
</reference>
<reference key="10">
    <citation type="journal article" date="2006" name="Nat. Biotechnol.">
        <title>A probability-based approach for high-throughput protein phosphorylation analysis and site localization.</title>
        <authorList>
            <person name="Beausoleil S.A."/>
            <person name="Villen J."/>
            <person name="Gerber S.A."/>
            <person name="Rush J."/>
            <person name="Gygi S.P."/>
        </authorList>
    </citation>
    <scope>PHOSPHORYLATION [LARGE SCALE ANALYSIS] AT SER-614; SER-758 AND SER-762</scope>
    <scope>IDENTIFICATION BY MASS SPECTROMETRY [LARGE SCALE ANALYSIS]</scope>
    <source>
        <tissue>Cervix carcinoma</tissue>
    </source>
</reference>
<reference key="11">
    <citation type="journal article" date="2008" name="J. Proteome Res.">
        <title>Phosphorylation analysis of primary human T lymphocytes using sequential IMAC and titanium oxide enrichment.</title>
        <authorList>
            <person name="Carrascal M."/>
            <person name="Ovelleiro D."/>
            <person name="Casas V."/>
            <person name="Gay M."/>
            <person name="Abian J."/>
        </authorList>
    </citation>
    <scope>PHOSPHORYLATION [LARGE SCALE ANALYSIS] AT SER-374</scope>
    <scope>IDENTIFICATION BY MASS SPECTROMETRY [LARGE SCALE ANALYSIS]</scope>
    <source>
        <tissue>T-cell</tissue>
    </source>
</reference>
<reference key="12">
    <citation type="journal article" date="2008" name="Proc. Natl. Acad. Sci. U.S.A.">
        <title>A quantitative atlas of mitotic phosphorylation.</title>
        <authorList>
            <person name="Dephoure N."/>
            <person name="Zhou C."/>
            <person name="Villen J."/>
            <person name="Beausoleil S.A."/>
            <person name="Bakalarski C.E."/>
            <person name="Elledge S.J."/>
            <person name="Gygi S.P."/>
        </authorList>
    </citation>
    <scope>PHOSPHORYLATION [LARGE SCALE ANALYSIS] AT SER-374; SER-479; SER-485; THR-517; SER-593; SER-614; THR-723; SER-758; SER-900; SER-909; SER-928 AND SER-1099</scope>
    <scope>IDENTIFICATION BY MASS SPECTROMETRY [LARGE SCALE ANALYSIS]</scope>
    <source>
        <tissue>Cervix carcinoma</tissue>
    </source>
</reference>
<reference key="13">
    <citation type="journal article" date="2009" name="Anal. Chem.">
        <title>Lys-N and trypsin cover complementary parts of the phosphoproteome in a refined SCX-based approach.</title>
        <authorList>
            <person name="Gauci S."/>
            <person name="Helbig A.O."/>
            <person name="Slijper M."/>
            <person name="Krijgsveld J."/>
            <person name="Heck A.J."/>
            <person name="Mohammed S."/>
        </authorList>
    </citation>
    <scope>IDENTIFICATION BY MASS SPECTROMETRY [LARGE SCALE ANALYSIS]</scope>
</reference>
<reference key="14">
    <citation type="journal article" date="2009" name="Sci. Signal.">
        <title>Quantitative phosphoproteomic analysis of T cell receptor signaling reveals system-wide modulation of protein-protein interactions.</title>
        <authorList>
            <person name="Mayya V."/>
            <person name="Lundgren D.H."/>
            <person name="Hwang S.-I."/>
            <person name="Rezaul K."/>
            <person name="Wu L."/>
            <person name="Eng J.K."/>
            <person name="Rodionov V."/>
            <person name="Han D.K."/>
        </authorList>
    </citation>
    <scope>PHOSPHORYLATION [LARGE SCALE ANALYSIS] AT SER-374; SER-473; SER-476; THR-482; SER-485; SER-593; THR-598; SER-614; SER-665; THR-732; SER-826; SER-909 AND SER-1099</scope>
    <scope>IDENTIFICATION BY MASS SPECTROMETRY [LARGE SCALE ANALYSIS]</scope>
    <source>
        <tissue>Leukemic T-cell</tissue>
    </source>
</reference>
<reference key="15">
    <citation type="journal article" date="2010" name="Sci. Signal.">
        <title>Quantitative phosphoproteomics reveals widespread full phosphorylation site occupancy during mitosis.</title>
        <authorList>
            <person name="Olsen J.V."/>
            <person name="Vermeulen M."/>
            <person name="Santamaria A."/>
            <person name="Kumar C."/>
            <person name="Miller M.L."/>
            <person name="Jensen L.J."/>
            <person name="Gnad F."/>
            <person name="Cox J."/>
            <person name="Jensen T.S."/>
            <person name="Nigg E.A."/>
            <person name="Brunak S."/>
            <person name="Mann M."/>
        </authorList>
    </citation>
    <scope>PHOSPHORYLATION [LARGE SCALE ANALYSIS] AT SER-374; SER-473; THR-482; THR-517; SER-593; SER-614; THR-723; SER-928 AND SER-1099</scope>
    <scope>IDENTIFICATION BY MASS SPECTROMETRY [LARGE SCALE ANALYSIS]</scope>
    <source>
        <tissue>Cervix carcinoma</tissue>
    </source>
</reference>
<reference key="16">
    <citation type="journal article" date="2011" name="BMC Syst. Biol.">
        <title>Initial characterization of the human central proteome.</title>
        <authorList>
            <person name="Burkard T.R."/>
            <person name="Planyavsky M."/>
            <person name="Kaupe I."/>
            <person name="Breitwieser F.P."/>
            <person name="Buerckstuemmer T."/>
            <person name="Bennett K.L."/>
            <person name="Superti-Furga G."/>
            <person name="Colinge J."/>
        </authorList>
    </citation>
    <scope>IDENTIFICATION BY MASS SPECTROMETRY [LARGE SCALE ANALYSIS]</scope>
</reference>
<reference key="17">
    <citation type="journal article" date="2011" name="Sci. Signal.">
        <title>System-wide temporal characterization of the proteome and phosphoproteome of human embryonic stem cell differentiation.</title>
        <authorList>
            <person name="Rigbolt K.T."/>
            <person name="Prokhorova T.A."/>
            <person name="Akimov V."/>
            <person name="Henningsen J."/>
            <person name="Johansen P.T."/>
            <person name="Kratchmarova I."/>
            <person name="Kassem M."/>
            <person name="Mann M."/>
            <person name="Olsen J.V."/>
            <person name="Blagoev B."/>
        </authorList>
    </citation>
    <scope>PHOSPHORYLATION [LARGE SCALE ANALYSIS] AT SER-356; THR-358; SER-374 AND SER-593</scope>
    <scope>IDENTIFICATION BY MASS SPECTROMETRY [LARGE SCALE ANALYSIS]</scope>
</reference>
<reference key="18">
    <citation type="journal article" date="2011" name="Transcription">
        <title>Control of the RNA polymerase II phosphorylation state in promoter regions by CTD interaction domain-containing proteins RPRD1A and RPRD1B.</title>
        <authorList>
            <person name="Ni Z."/>
            <person name="Olsen J.B."/>
            <person name="Guo X."/>
            <person name="Zhong G."/>
            <person name="Ruan E.D."/>
            <person name="Marcon E."/>
            <person name="Young P."/>
            <person name="Guo H."/>
            <person name="Li J."/>
            <person name="Moffat J."/>
            <person name="Emili A."/>
            <person name="Greenblatt J.F."/>
        </authorList>
    </citation>
    <scope>IDENTIFICATION IN THE RNA POLYMERASE II COMPLEX</scope>
</reference>
<reference key="19">
    <citation type="journal article" date="2012" name="Proc. Natl. Acad. Sci. U.S.A.">
        <title>N-terminal acetylome analyses and functional insights of the N-terminal acetyltransferase NatB.</title>
        <authorList>
            <person name="Van Damme P."/>
            <person name="Lasa M."/>
            <person name="Polevoda B."/>
            <person name="Gazquez C."/>
            <person name="Elosegui-Artola A."/>
            <person name="Kim D.S."/>
            <person name="De Juan-Pardo E."/>
            <person name="Demeyer K."/>
            <person name="Hole K."/>
            <person name="Larrea E."/>
            <person name="Timmerman E."/>
            <person name="Prieto J."/>
            <person name="Arnesen T."/>
            <person name="Sherman F."/>
            <person name="Gevaert K."/>
            <person name="Aldabe R."/>
        </authorList>
    </citation>
    <scope>IDENTIFICATION BY MASS SPECTROMETRY [LARGE SCALE ANALYSIS]</scope>
</reference>
<reference key="20">
    <citation type="journal article" date="2013" name="J. Proteome Res.">
        <title>Toward a comprehensive characterization of a human cancer cell phosphoproteome.</title>
        <authorList>
            <person name="Zhou H."/>
            <person name="Di Palma S."/>
            <person name="Preisinger C."/>
            <person name="Peng M."/>
            <person name="Polat A.N."/>
            <person name="Heck A.J."/>
            <person name="Mohammed S."/>
        </authorList>
    </citation>
    <scope>PHOSPHORYLATION [LARGE SCALE ANALYSIS] AT SER-16; THR-358; SER-374; SER-485; THR-517; SER-614; SER-663; SER-665; SER-716; THR-723; SER-758; THR-763; SER-769; SER-817; SER-909; SER-965; SER-976 AND SER-1099</scope>
    <scope>IDENTIFICATION BY MASS SPECTROMETRY [LARGE SCALE ANALYSIS]</scope>
    <source>
        <tissue>Cervix carcinoma</tissue>
        <tissue>Erythroleukemia</tissue>
    </source>
</reference>
<reference key="21">
    <citation type="journal article" date="2014" name="J. Proteomics">
        <title>An enzyme assisted RP-RPLC approach for in-depth analysis of human liver phosphoproteome.</title>
        <authorList>
            <person name="Bian Y."/>
            <person name="Song C."/>
            <person name="Cheng K."/>
            <person name="Dong M."/>
            <person name="Wang F."/>
            <person name="Huang J."/>
            <person name="Sun D."/>
            <person name="Wang L."/>
            <person name="Ye M."/>
            <person name="Zou H."/>
        </authorList>
    </citation>
    <scope>PHOSPHORYLATION [LARGE SCALE ANALYSIS] AT SER-374; SER-564 AND THR-723</scope>
    <scope>IDENTIFICATION BY MASS SPECTROMETRY [LARGE SCALE ANALYSIS]</scope>
    <source>
        <tissue>Liver</tissue>
    </source>
</reference>
<reference key="22">
    <citation type="journal article" date="2014" name="Mol. Cell. Proteomics">
        <title>Immunoaffinity enrichment and mass spectrometry analysis of protein methylation.</title>
        <authorList>
            <person name="Guo A."/>
            <person name="Gu H."/>
            <person name="Zhou J."/>
            <person name="Mulhern D."/>
            <person name="Wang Y."/>
            <person name="Lee K.A."/>
            <person name="Yang V."/>
            <person name="Aguiar M."/>
            <person name="Kornhauser J."/>
            <person name="Jia X."/>
            <person name="Ren J."/>
            <person name="Beausoleil S.A."/>
            <person name="Silva J.C."/>
            <person name="Vemulapalli V."/>
            <person name="Bedford M.T."/>
            <person name="Comb M.J."/>
        </authorList>
    </citation>
    <scope>METHYLATION [LARGE SCALE ANALYSIS] AT ARG-1366; ARG-1424 AND ARG-1430</scope>
    <scope>IDENTIFICATION BY MASS SPECTROMETRY [LARGE SCALE ANALYSIS]</scope>
    <source>
        <tissue>Colon carcinoma</tissue>
    </source>
</reference>
<reference key="23">
    <citation type="journal article" date="2015" name="Hum. Mol. Genet.">
        <title>Biochemical and cellular analysis of Ogden syndrome reveals downstream Nt-acetylation defects.</title>
        <authorList>
            <person name="Myklebust L.M."/>
            <person name="Van Damme P."/>
            <person name="Stoeve S.I."/>
            <person name="Doerfel M.J."/>
            <person name="Abboud A."/>
            <person name="Kalvik T.V."/>
            <person name="Grauffel C."/>
            <person name="Jonckheere V."/>
            <person name="Wu Y."/>
            <person name="Swensen J."/>
            <person name="Kaasa H."/>
            <person name="Liszczak G."/>
            <person name="Marmorstein R."/>
            <person name="Reuter N."/>
            <person name="Lyon G.J."/>
            <person name="Gevaert K."/>
            <person name="Arnesen T."/>
        </authorList>
    </citation>
    <scope>ACETYLATION AT ALA-2</scope>
    <scope>CLEAVAGE OF INITIATOR METHIONINE</scope>
</reference>
<reference key="24">
    <citation type="journal article" date="2014" name="Nat. Struct. Mol. Biol.">
        <title>RPRD1A and RPRD1B are human RNA polymerase II C-terminal domain scaffolds for Ser5 dephosphorylation.</title>
        <authorList>
            <person name="Ni Z."/>
            <person name="Xu C."/>
            <person name="Guo X."/>
            <person name="Hunter G.O."/>
            <person name="Kuznetsova O.V."/>
            <person name="Tempel W."/>
            <person name="Marcon E."/>
            <person name="Zhong G."/>
            <person name="Guo H."/>
            <person name="Kuo W.H."/>
            <person name="Li J."/>
            <person name="Young P."/>
            <person name="Olsen J.B."/>
            <person name="Wan C."/>
            <person name="Loppnau P."/>
            <person name="El Bakkouri M."/>
            <person name="Senisterra G.A."/>
            <person name="He H."/>
            <person name="Huang H."/>
            <person name="Sidhu S.S."/>
            <person name="Emili A."/>
            <person name="Murphy S."/>
            <person name="Mosley A.L."/>
            <person name="Arrowsmith C.H."/>
            <person name="Min J."/>
            <person name="Greenblatt J.F."/>
        </authorList>
    </citation>
    <scope>X-RAY CRYSTALLOGRAPHY (1.80 ANGSTROMS) OF 19-149</scope>
</reference>
<sequence>MAAGGGGGSSKASSSSASSAGALESSLDRKFQSVTNTMESIQGLSSWCIENKKHHSTIVYHWMKWLRRSAYPHRLNLFYLANDVIQNCKRKNAIIFRESFADVLPEAAALVKDPSVSKSVERIFKIWEDRNVYPEEMIVALREALSTTFKTQKQLKENLNKQPNKQWKKSQTSTNPKAALKSKIVAEFRSQALIEELLLYKRSEDQIELKEKQLSTMRVDVCSTETLKCLKDKTGGKKFSKEFEEASSKLEEFVNGLDKQVKNGPSLTEALENAGIFYEAQYKEVKVVANAYKTFANRVNNLKKKLDQLKSTLPDPEESPVPSPSMDAPSPTGSESPFQGMGGEESQSPTMESEKSATPEPVTDNRDVEDMELSDVEDDGSKIIVEDRKEKPAEKSAVSTSVPTKPTENISKASSCTPVPVTMTATPPLPKPVNTSLSPSPALALPNLANVDLAKISSILSSLTSVMKNTGVSPASRPSPGTPTSPSNLTSGLKTPAPATTTSHNPLANILSKVEITPESILSALSKTQTQSAPALQGLSSLLQSVTGNPVPASEAASQSTSASPANTTVSTIKGRNLPSSAQPFIPKSFNYSPNSSTSEVSSTSASKASIGQSPGLPSTTFKLPSNSLGFTATHNTSPAAPPTEVTICQSSEVSKPKLESESTSPSLEMKIHNFLKGNPGFSGLNLNIPILSSLGSSAPSESHPSDFQRGPTSTSIDNIDGTPVRDERSGTPTQDEMMDKPTSSSVDTMSLLSKIISPGSSTPSSTRSPPPGRDESYPRELSNSVSTYRPFGLGSESPYKQPSDGMERPSSLMDSSQEKFYPDTSFQEDEDYRDFEYSGPPPSAMMNLEKKPAKSILKSSKLSDTTEYQPILSSYSHRAQEFGVKSAFPPSVRALLDSSENCDRLSSSPGLFGAFSVRGNEPGSDRSPSPSKNDSFFTPDSNHNSLSQSTTGHLSLPQKQYPDSPHPVPHRSLFSPQNTLAAPTGHPPTSGVEKVLASTISTTSTIEFKNMLKNASRKPSDDKHFGQAPSKGTPSDGVSLSNLTQPSLTATDQQQQEEHYRIETRVSSSCLDLPDSTEEKGAPIETLGYHSASNRRMSGEPIQTVESIRVPGKGNRGHGREASRVGWFDLSTSGSSFDNGPSSASELASLGGGGSGGLTGFKTAPYKERAPQFQESVGSFRSNSFNSTFEHHLPPSPLEHGTPFQREPVGPSSAPPVPPKDHGGIFSRDAPTHLPSVDLSNPFTKEAALAHAAPPPPPGEHSGIPFPTPPPPPPPGEHSSSGGSGVPFSTPPPPPPPVDHSGVVPFPAPPLAEHGVAGAVAVFPKDHSSLLQGTLAEHFGVLPGPRDHGGPTQRDLNGPGLSRVRESLTLPSHSLEHLGPPHGGGGGGGSNSSSGPPLGPSHRDTISRSGIILRSPRPDFRPREPFLSRDPFHSLKRPRPPFARGPPFFAPKRPFFPPRY</sequence>
<name>RPRD2_HUMAN</name>
<protein>
    <recommendedName>
        <fullName>Regulation of nuclear pre-mRNA domain-containing protein 2</fullName>
    </recommendedName>
</protein>
<keyword id="KW-0002">3D-structure</keyword>
<keyword id="KW-0007">Acetylation</keyword>
<keyword id="KW-0025">Alternative splicing</keyword>
<keyword id="KW-0488">Methylation</keyword>
<keyword id="KW-0597">Phosphoprotein</keyword>
<keyword id="KW-1267">Proteomics identification</keyword>
<keyword id="KW-1185">Reference proteome</keyword>
<evidence type="ECO:0000250" key="1">
    <source>
        <dbReference type="UniProtKB" id="Q6NXI6"/>
    </source>
</evidence>
<evidence type="ECO:0000255" key="2">
    <source>
        <dbReference type="PROSITE-ProRule" id="PRU00724"/>
    </source>
</evidence>
<evidence type="ECO:0000256" key="3">
    <source>
        <dbReference type="SAM" id="MobiDB-lite"/>
    </source>
</evidence>
<evidence type="ECO:0000269" key="4">
    <source>
    </source>
</evidence>
<evidence type="ECO:0000269" key="5">
    <source>
    </source>
</evidence>
<evidence type="ECO:0000303" key="6">
    <source>
    </source>
</evidence>
<evidence type="ECO:0000303" key="7">
    <source>
    </source>
</evidence>
<evidence type="ECO:0000303" key="8">
    <source>
    </source>
</evidence>
<evidence type="ECO:0000305" key="9"/>
<evidence type="ECO:0007744" key="10">
    <source>
    </source>
</evidence>
<evidence type="ECO:0007744" key="11">
    <source>
    </source>
</evidence>
<evidence type="ECO:0007744" key="12">
    <source>
    </source>
</evidence>
<evidence type="ECO:0007744" key="13">
    <source>
    </source>
</evidence>
<evidence type="ECO:0007744" key="14">
    <source>
    </source>
</evidence>
<evidence type="ECO:0007744" key="15">
    <source>
    </source>
</evidence>
<evidence type="ECO:0007744" key="16">
    <source>
    </source>
</evidence>
<evidence type="ECO:0007744" key="17">
    <source>
    </source>
</evidence>
<evidence type="ECO:0007744" key="18">
    <source>
    </source>
</evidence>
<evidence type="ECO:0007744" key="19">
    <source>
    </source>
</evidence>
<evidence type="ECO:0007829" key="20">
    <source>
        <dbReference type="PDB" id="4FLB"/>
    </source>
</evidence>
<accession>Q5VT52</accession>
<accession>A8K6N8</accession>
<accession>B3KPT1</accession>
<accession>B4E2Q6</accession>
<accession>O75048</accession>
<accession>Q5VT51</accession>
<accession>Q5VT53</accession>
<accession>Q6MZL4</accession>
<accession>Q86XD2</accession>
<accession>Q9P0D7</accession>
<proteinExistence type="evidence at protein level"/>
<comment type="subunit">
    <text evidence="4">Associates with the RNA polymerase II complex.</text>
</comment>
<comment type="alternative products">
    <event type="alternative splicing"/>
    <isoform>
        <id>Q5VT52-1</id>
        <name>1</name>
        <sequence type="displayed"/>
    </isoform>
    <isoform>
        <id>Q5VT52-2</id>
        <name>2</name>
        <sequence type="described" ref="VSP_019546"/>
    </isoform>
    <isoform>
        <id>Q5VT52-3</id>
        <name>3</name>
        <sequence type="described" ref="VSP_019547"/>
    </isoform>
    <isoform>
        <id>Q5VT52-4</id>
        <name>4</name>
        <sequence type="described" ref="VSP_035574 VSP_035575"/>
    </isoform>
    <isoform>
        <id>Q5VT52-5</id>
        <name>5</name>
        <sequence type="described" ref="VSP_019547 VSP_053733 VSP_053734"/>
    </isoform>
</comment>
<comment type="sequence caution" evidence="9">
    <conflict type="erroneous initiation">
        <sequence resource="EMBL-CDS" id="AAF28922"/>
    </conflict>
</comment>
<comment type="sequence caution" evidence="9">
    <conflict type="erroneous initiation">
        <sequence resource="EMBL-CDS" id="AAH45623"/>
    </conflict>
</comment>
<organism>
    <name type="scientific">Homo sapiens</name>
    <name type="common">Human</name>
    <dbReference type="NCBI Taxonomy" id="9606"/>
    <lineage>
        <taxon>Eukaryota</taxon>
        <taxon>Metazoa</taxon>
        <taxon>Chordata</taxon>
        <taxon>Craniata</taxon>
        <taxon>Vertebrata</taxon>
        <taxon>Euteleostomi</taxon>
        <taxon>Mammalia</taxon>
        <taxon>Eutheria</taxon>
        <taxon>Euarchontoglires</taxon>
        <taxon>Primates</taxon>
        <taxon>Haplorrhini</taxon>
        <taxon>Catarrhini</taxon>
        <taxon>Hominidae</taxon>
        <taxon>Homo</taxon>
    </lineage>
</organism>